<proteinExistence type="evidence at transcript level"/>
<evidence type="ECO:0000250" key="1"/>
<evidence type="ECO:0000255" key="2">
    <source>
        <dbReference type="PROSITE-ProRule" id="PRU01346"/>
    </source>
</evidence>
<evidence type="ECO:0000256" key="3">
    <source>
        <dbReference type="SAM" id="MobiDB-lite"/>
    </source>
</evidence>
<evidence type="ECO:0000305" key="4"/>
<protein>
    <recommendedName>
        <fullName>Probable U6 snRNA-associated Sm-like protein LSm4</fullName>
    </recommendedName>
    <alternativeName>
        <fullName>Glycine-rich protein 2</fullName>
    </alternativeName>
</protein>
<accession>Q9ZRU9</accession>
<name>LSM4_FAGSY</name>
<reference key="1">
    <citation type="submission" date="1998-11" db="EMBL/GenBank/DDBJ databases">
        <title>A Fagus sylvatica cDNA encoding a XET protein.</title>
        <authorList>
            <person name="Lorenzo O."/>
            <person name="Calvo A."/>
            <person name="Nicolas C."/>
            <person name="Nicolas G."/>
            <person name="Rodriguez D."/>
        </authorList>
    </citation>
    <scope>NUCLEOTIDE SEQUENCE [MRNA]</scope>
    <source>
        <tissue>Seed</tissue>
    </source>
</reference>
<comment type="function">
    <text evidence="1">Binds specifically to the 3'-terminal U-tract of U6 snRNA.</text>
</comment>
<comment type="subunit">
    <text evidence="1">LSm subunits form a heteromer with a doughnut shape.</text>
</comment>
<comment type="subcellular location">
    <subcellularLocation>
        <location evidence="4">Nucleus</location>
    </subcellularLocation>
</comment>
<comment type="similarity">
    <text evidence="4">Belongs to the snRNP Sm proteins family.</text>
</comment>
<dbReference type="EMBL" id="AJ130887">
    <property type="protein sequence ID" value="CAA10233.1"/>
    <property type="molecule type" value="mRNA"/>
</dbReference>
<dbReference type="SMR" id="Q9ZRU9"/>
<dbReference type="GO" id="GO:0005681">
    <property type="term" value="C:spliceosomal complex"/>
    <property type="evidence" value="ECO:0007669"/>
    <property type="project" value="UniProtKB-KW"/>
</dbReference>
<dbReference type="GO" id="GO:0003723">
    <property type="term" value="F:RNA binding"/>
    <property type="evidence" value="ECO:0007669"/>
    <property type="project" value="UniProtKB-KW"/>
</dbReference>
<dbReference type="GO" id="GO:0000398">
    <property type="term" value="P:mRNA splicing, via spliceosome"/>
    <property type="evidence" value="ECO:0007669"/>
    <property type="project" value="InterPro"/>
</dbReference>
<dbReference type="GO" id="GO:0000956">
    <property type="term" value="P:nuclear-transcribed mRNA catabolic process"/>
    <property type="evidence" value="ECO:0007669"/>
    <property type="project" value="InterPro"/>
</dbReference>
<dbReference type="CDD" id="cd01723">
    <property type="entry name" value="LSm4"/>
    <property type="match status" value="1"/>
</dbReference>
<dbReference type="FunFam" id="2.30.30.100:FF:000005">
    <property type="entry name" value="U6 snRNA-associated Sm-like protein LSm4"/>
    <property type="match status" value="1"/>
</dbReference>
<dbReference type="Gene3D" id="2.30.30.100">
    <property type="match status" value="1"/>
</dbReference>
<dbReference type="InterPro" id="IPR034101">
    <property type="entry name" value="Lsm4"/>
</dbReference>
<dbReference type="InterPro" id="IPR027141">
    <property type="entry name" value="LSm4/Sm_D1/D3"/>
</dbReference>
<dbReference type="InterPro" id="IPR010920">
    <property type="entry name" value="LSM_dom_sf"/>
</dbReference>
<dbReference type="InterPro" id="IPR047575">
    <property type="entry name" value="Sm"/>
</dbReference>
<dbReference type="InterPro" id="IPR001163">
    <property type="entry name" value="Sm_dom_euk/arc"/>
</dbReference>
<dbReference type="PANTHER" id="PTHR23338">
    <property type="entry name" value="SMALL NUCLEAR RIBONUCLEOPROTEIN SM"/>
    <property type="match status" value="1"/>
</dbReference>
<dbReference type="Pfam" id="PF01423">
    <property type="entry name" value="LSM"/>
    <property type="match status" value="1"/>
</dbReference>
<dbReference type="SMART" id="SM00651">
    <property type="entry name" value="Sm"/>
    <property type="match status" value="1"/>
</dbReference>
<dbReference type="SUPFAM" id="SSF50182">
    <property type="entry name" value="Sm-like ribonucleoproteins"/>
    <property type="match status" value="1"/>
</dbReference>
<dbReference type="PROSITE" id="PS52002">
    <property type="entry name" value="SM"/>
    <property type="match status" value="1"/>
</dbReference>
<sequence length="148" mass="16348">MLPLSLLKTAQGHPMLVELKSGETYNGHLVNCDTWMNIHLREVICTSKDGDRFWRMPDCYIRGNTIKYLRVPDEVIDKVQEETKSRADRKPPGVGRGRGRGREEGSGARQVRGAGRDVMMQVAKAWVEVRGRGASAGKSGGRGGRGRG</sequence>
<organism>
    <name type="scientific">Fagus sylvatica</name>
    <name type="common">Beechnut</name>
    <dbReference type="NCBI Taxonomy" id="28930"/>
    <lineage>
        <taxon>Eukaryota</taxon>
        <taxon>Viridiplantae</taxon>
        <taxon>Streptophyta</taxon>
        <taxon>Embryophyta</taxon>
        <taxon>Tracheophyta</taxon>
        <taxon>Spermatophyta</taxon>
        <taxon>Magnoliopsida</taxon>
        <taxon>eudicotyledons</taxon>
        <taxon>Gunneridae</taxon>
        <taxon>Pentapetalae</taxon>
        <taxon>rosids</taxon>
        <taxon>fabids</taxon>
        <taxon>Fagales</taxon>
        <taxon>Fagaceae</taxon>
        <taxon>Fagus</taxon>
    </lineage>
</organism>
<feature type="chain" id="PRO_0000125567" description="Probable U6 snRNA-associated Sm-like protein LSm4">
    <location>
        <begin position="1"/>
        <end position="148"/>
    </location>
</feature>
<feature type="domain" description="Sm" evidence="2">
    <location>
        <begin position="2"/>
        <end position="75"/>
    </location>
</feature>
<feature type="region of interest" description="Disordered" evidence="3">
    <location>
        <begin position="80"/>
        <end position="115"/>
    </location>
</feature>
<feature type="compositionally biased region" description="Basic and acidic residues" evidence="3">
    <location>
        <begin position="80"/>
        <end position="91"/>
    </location>
</feature>
<gene>
    <name type="primary">LSM4</name>
    <name type="synonym">GRP2</name>
</gene>
<keyword id="KW-0507">mRNA processing</keyword>
<keyword id="KW-0508">mRNA splicing</keyword>
<keyword id="KW-0539">Nucleus</keyword>
<keyword id="KW-0687">Ribonucleoprotein</keyword>
<keyword id="KW-0694">RNA-binding</keyword>
<keyword id="KW-0747">Spliceosome</keyword>